<dbReference type="EMBL" id="U74489">
    <property type="protein sequence ID" value="AAB17570.1"/>
    <property type="molecule type" value="Genomic_RNA"/>
</dbReference>
<dbReference type="SMR" id="Q96597"/>
<dbReference type="GO" id="GO:0039624">
    <property type="term" value="C:viral outer capsid"/>
    <property type="evidence" value="ECO:0007669"/>
    <property type="project" value="UniProtKB-KW"/>
</dbReference>
<dbReference type="GO" id="GO:0005198">
    <property type="term" value="F:structural molecule activity"/>
    <property type="evidence" value="ECO:0007669"/>
    <property type="project" value="InterPro"/>
</dbReference>
<dbReference type="GO" id="GO:0140267">
    <property type="term" value="P:symbiont entry into host cell via permeabilization of host membrane"/>
    <property type="evidence" value="ECO:0007669"/>
    <property type="project" value="UniProtKB-KW"/>
</dbReference>
<dbReference type="InterPro" id="IPR000145">
    <property type="entry name" value="Capsid_VP5_Orbivir"/>
</dbReference>
<dbReference type="Pfam" id="PF00901">
    <property type="entry name" value="Orbi_VP5"/>
    <property type="match status" value="1"/>
</dbReference>
<comment type="function">
    <text evidence="1">VP5 protein is one of the two proteins (with VP2) which constitute the virus particle outer capsid. Acts as a membrane permeabilization protein that mediates release of viral particles from endosomal compartments into the cytoplasm. Permeabilization activity is probably negatively regulated by VP2 and is triggered by endosomal degradation of VP2 and exposure to low pH (By similarity).</text>
</comment>
<comment type="subcellular location">
    <subcellularLocation>
        <location evidence="2">Virion</location>
    </subcellularLocation>
</comment>
<comment type="similarity">
    <text evidence="2">Belongs to the orbivirus VP5 family.</text>
</comment>
<organism>
    <name type="scientific">African horse sickness virus 9</name>
    <name type="common">AHSV-9</name>
    <dbReference type="NCBI Taxonomy" id="10897"/>
    <lineage>
        <taxon>Viruses</taxon>
        <taxon>Riboviria</taxon>
        <taxon>Orthornavirae</taxon>
        <taxon>Duplornaviricota</taxon>
        <taxon>Resentoviricetes</taxon>
        <taxon>Reovirales</taxon>
        <taxon>Sedoreoviridae</taxon>
        <taxon>Orbivirus</taxon>
        <taxon>African horse sickness virus</taxon>
    </lineage>
</organism>
<organismHost>
    <name type="scientific">Camelus dromedarius</name>
    <name type="common">Dromedary</name>
    <name type="synonym">Arabian camel</name>
    <dbReference type="NCBI Taxonomy" id="9838"/>
</organismHost>
<organismHost>
    <name type="scientific">Canis lupus familiaris</name>
    <name type="common">Dog</name>
    <name type="synonym">Canis familiaris</name>
    <dbReference type="NCBI Taxonomy" id="9615"/>
</organismHost>
<organismHost>
    <name type="scientific">Equus asinus</name>
    <name type="common">Donkey</name>
    <name type="synonym">Equus africanus asinus</name>
    <dbReference type="NCBI Taxonomy" id="9793"/>
</organismHost>
<organismHost>
    <name type="scientific">Equus caballus</name>
    <name type="common">Horse</name>
    <dbReference type="NCBI Taxonomy" id="9796"/>
</organismHost>
<organismHost>
    <name type="scientific">Equus hemionus</name>
    <name type="common">Onager</name>
    <name type="synonym">Asian wild ass</name>
    <dbReference type="NCBI Taxonomy" id="9794"/>
</organismHost>
<organismHost>
    <name type="scientific">Equus quagga burchellii</name>
    <name type="common">Burchell's zebra</name>
    <name type="synonym">Equus burchelli</name>
    <dbReference type="NCBI Taxonomy" id="89252"/>
</organismHost>
<organismHost>
    <name type="scientific">Loxodonta africana</name>
    <name type="common">African elephant</name>
    <dbReference type="NCBI Taxonomy" id="9785"/>
</organismHost>
<feature type="chain" id="PRO_0000222718" description="Outer capsid protein VP5">
    <location>
        <begin position="1"/>
        <end position="505"/>
    </location>
</feature>
<feature type="region of interest" description="Involved in membrane permeabilization" evidence="1">
    <location>
        <begin position="1"/>
        <end position="42"/>
    </location>
</feature>
<evidence type="ECO:0000250" key="1"/>
<evidence type="ECO:0000305" key="2"/>
<reference key="1">
    <citation type="journal article" date="1997" name="Virus Res.">
        <title>Comparative sequence analysis and expression of the M6 gene, encoding the outer capsid protein VP5, of African horsesickness virus serotype nine.</title>
        <authorList>
            <person name="du Plessis M."/>
            <person name="Nel L.H."/>
        </authorList>
    </citation>
    <scope>NUCLEOTIDE SEQUENCE [GENOMIC RNA]</scope>
</reference>
<proteinExistence type="inferred from homology"/>
<keyword id="KW-0167">Capsid protein</keyword>
<keyword id="KW-1152">Outer capsid protein</keyword>
<keyword id="KW-1162">Viral penetration into host cytoplasm</keyword>
<keyword id="KW-1173">Viral penetration via permeabilization of host membrane</keyword>
<keyword id="KW-0946">Virion</keyword>
<keyword id="KW-1160">Virus entry into host cell</keyword>
<sequence length="505" mass="56771">MGKFTSFLKRAGSATKKALTSDAAKRMYKMAGKTLQKVVESEVGSAAIDGVMQGTIQSIIQGENLGAQFKQAVILNVAGTLESAPDPLNPGEQHIIINVSEIERAEKEDRVIETHNKKIIERFGGHLLKIRKIMKGEAEAEQLEGKEMMQVEKALKGMLRIGKDQSERITRLYRALQTEEDLRTSDETRMISEYREKFEALKQAIELEQQATHGEAVQEMLDLSAEVIETAAEEVPVFGAGRANVVATTRAIQGGLKLKEIIDKLTGIDLSHLKVADIHPHIIEKAMQSDKIPDNRLAMAIKSKVEVIDEMNTETEHVYDPSCLIVKKEYEKHDNKYHVNIPSALKIHSEHTPKVHIYTTPWDSDKVFICRCIAPHHQQRSFMIGFDLEIEFVFYEDTSVEGHIKHGGAVSIEGRGFRQAYSEFMNAAWSMPSTPELHKEKMQRSLGSHPIYMGSMDYTVSYEQLVSNEMKLVYDTDLQMHCLRGPLKIPKGTLMNALLFAVKVA</sequence>
<accession>Q96597</accession>
<protein>
    <recommendedName>
        <fullName>Outer capsid protein VP5</fullName>
    </recommendedName>
</protein>
<gene>
    <name type="primary">Segment-6</name>
    <name type="synonym">M6</name>
</gene>
<name>VP5_AHSV9</name>